<reference key="1">
    <citation type="journal article" date="2002" name="Proc. Natl. Acad. Sci. U.S.A.">
        <title>The complete genome of hyperthermophile Methanopyrus kandleri AV19 and monophyly of archaeal methanogens.</title>
        <authorList>
            <person name="Slesarev A.I."/>
            <person name="Mezhevaya K.V."/>
            <person name="Makarova K.S."/>
            <person name="Polushin N.N."/>
            <person name="Shcherbinina O.V."/>
            <person name="Shakhova V.V."/>
            <person name="Belova G.I."/>
            <person name="Aravind L."/>
            <person name="Natale D.A."/>
            <person name="Rogozin I.B."/>
            <person name="Tatusov R.L."/>
            <person name="Wolf Y.I."/>
            <person name="Stetter K.O."/>
            <person name="Malykh A.G."/>
            <person name="Koonin E.V."/>
            <person name="Kozyavkin S.A."/>
        </authorList>
    </citation>
    <scope>NUCLEOTIDE SEQUENCE [LARGE SCALE GENOMIC DNA]</scope>
    <source>
        <strain>AV19 / DSM 6324 / JCM 9639 / NBRC 100938</strain>
    </source>
</reference>
<protein>
    <recommendedName>
        <fullName evidence="1">Aspartate carbamoyltransferase regulatory chain</fullName>
    </recommendedName>
</protein>
<organism>
    <name type="scientific">Methanopyrus kandleri (strain AV19 / DSM 6324 / JCM 9639 / NBRC 100938)</name>
    <dbReference type="NCBI Taxonomy" id="190192"/>
    <lineage>
        <taxon>Archaea</taxon>
        <taxon>Methanobacteriati</taxon>
        <taxon>Methanobacteriota</taxon>
        <taxon>Methanomada group</taxon>
        <taxon>Methanopyri</taxon>
        <taxon>Methanopyrales</taxon>
        <taxon>Methanopyraceae</taxon>
        <taxon>Methanopyrus</taxon>
    </lineage>
</organism>
<evidence type="ECO:0000255" key="1">
    <source>
        <dbReference type="HAMAP-Rule" id="MF_00002"/>
    </source>
</evidence>
<accession>Q8TVB1</accession>
<name>PYRI_METKA</name>
<keyword id="KW-0479">Metal-binding</keyword>
<keyword id="KW-0665">Pyrimidine biosynthesis</keyword>
<keyword id="KW-1185">Reference proteome</keyword>
<keyword id="KW-0862">Zinc</keyword>
<feature type="chain" id="PRO_0000142332" description="Aspartate carbamoyltransferase regulatory chain">
    <location>
        <begin position="1"/>
        <end position="156"/>
    </location>
</feature>
<feature type="binding site" evidence="1">
    <location>
        <position position="107"/>
    </location>
    <ligand>
        <name>Zn(2+)</name>
        <dbReference type="ChEBI" id="CHEBI:29105"/>
    </ligand>
</feature>
<feature type="binding site" evidence="1">
    <location>
        <position position="112"/>
    </location>
    <ligand>
        <name>Zn(2+)</name>
        <dbReference type="ChEBI" id="CHEBI:29105"/>
    </ligand>
</feature>
<feature type="binding site" evidence="1">
    <location>
        <position position="137"/>
    </location>
    <ligand>
        <name>Zn(2+)</name>
        <dbReference type="ChEBI" id="CHEBI:29105"/>
    </ligand>
</feature>
<feature type="binding site" evidence="1">
    <location>
        <position position="140"/>
    </location>
    <ligand>
        <name>Zn(2+)</name>
        <dbReference type="ChEBI" id="CHEBI:29105"/>
    </ligand>
</feature>
<sequence>MIVALKVKRIEMGTVLDHLPPGTAPQIMRILDIDPTETTLLVAINVESSKMGRKDILKIEGKILSEEEANKVALVAPNATVNIVRDYSVAEKFQVKPPERVEGFLRCPNPNCITNDEREPVDTVFVRESKKPLEYRCRYCERTVREDQIRELIRPS</sequence>
<proteinExistence type="inferred from homology"/>
<comment type="function">
    <text evidence="1">Involved in allosteric regulation of aspartate carbamoyltransferase.</text>
</comment>
<comment type="cofactor">
    <cofactor evidence="1">
        <name>Zn(2+)</name>
        <dbReference type="ChEBI" id="CHEBI:29105"/>
    </cofactor>
    <text evidence="1">Binds 1 zinc ion per subunit.</text>
</comment>
<comment type="subunit">
    <text evidence="1">Contains catalytic and regulatory chains.</text>
</comment>
<comment type="similarity">
    <text evidence="1">Belongs to the PyrI family.</text>
</comment>
<gene>
    <name evidence="1" type="primary">pyrI</name>
    <name type="ordered locus">MK1481</name>
</gene>
<dbReference type="EMBL" id="AE009439">
    <property type="protein sequence ID" value="AAM02694.1"/>
    <property type="molecule type" value="Genomic_DNA"/>
</dbReference>
<dbReference type="SMR" id="Q8TVB1"/>
<dbReference type="FunCoup" id="Q8TVB1">
    <property type="interactions" value="86"/>
</dbReference>
<dbReference type="STRING" id="190192.MK1481"/>
<dbReference type="PaxDb" id="190192-MK1481"/>
<dbReference type="EnsemblBacteria" id="AAM02694">
    <property type="protein sequence ID" value="AAM02694"/>
    <property type="gene ID" value="MK1481"/>
</dbReference>
<dbReference type="KEGG" id="mka:MK1481"/>
<dbReference type="PATRIC" id="fig|190192.8.peg.1638"/>
<dbReference type="HOGENOM" id="CLU_128576_0_0_2"/>
<dbReference type="InParanoid" id="Q8TVB1"/>
<dbReference type="Proteomes" id="UP000001826">
    <property type="component" value="Chromosome"/>
</dbReference>
<dbReference type="GO" id="GO:0009347">
    <property type="term" value="C:aspartate carbamoyltransferase complex"/>
    <property type="evidence" value="ECO:0007669"/>
    <property type="project" value="InterPro"/>
</dbReference>
<dbReference type="GO" id="GO:0046872">
    <property type="term" value="F:metal ion binding"/>
    <property type="evidence" value="ECO:0007669"/>
    <property type="project" value="UniProtKB-KW"/>
</dbReference>
<dbReference type="GO" id="GO:0006207">
    <property type="term" value="P:'de novo' pyrimidine nucleobase biosynthetic process"/>
    <property type="evidence" value="ECO:0007669"/>
    <property type="project" value="InterPro"/>
</dbReference>
<dbReference type="GO" id="GO:0006221">
    <property type="term" value="P:pyrimidine nucleotide biosynthetic process"/>
    <property type="evidence" value="ECO:0007669"/>
    <property type="project" value="UniProtKB-UniRule"/>
</dbReference>
<dbReference type="Gene3D" id="2.30.30.20">
    <property type="entry name" value="Aspartate carbamoyltransferase regulatory subunit, C-terminal domain"/>
    <property type="match status" value="1"/>
</dbReference>
<dbReference type="Gene3D" id="3.30.70.140">
    <property type="entry name" value="Aspartate carbamoyltransferase regulatory subunit, N-terminal domain"/>
    <property type="match status" value="1"/>
</dbReference>
<dbReference type="HAMAP" id="MF_00002">
    <property type="entry name" value="Asp_carb_tr_reg"/>
    <property type="match status" value="1"/>
</dbReference>
<dbReference type="InterPro" id="IPR020545">
    <property type="entry name" value="Asp_carbamoyltransf_reg_N"/>
</dbReference>
<dbReference type="InterPro" id="IPR002801">
    <property type="entry name" value="Asp_carbamoylTrfase_reg"/>
</dbReference>
<dbReference type="InterPro" id="IPR020542">
    <property type="entry name" value="Asp_carbamoyltrfase_reg_C"/>
</dbReference>
<dbReference type="InterPro" id="IPR036792">
    <property type="entry name" value="Asp_carbatrfase_reg_C_sf"/>
</dbReference>
<dbReference type="InterPro" id="IPR036793">
    <property type="entry name" value="Asp_carbatrfase_reg_N_sf"/>
</dbReference>
<dbReference type="NCBIfam" id="TIGR00240">
    <property type="entry name" value="ATCase_reg"/>
    <property type="match status" value="1"/>
</dbReference>
<dbReference type="PANTHER" id="PTHR35805">
    <property type="entry name" value="ASPARTATE CARBAMOYLTRANSFERASE REGULATORY CHAIN"/>
    <property type="match status" value="1"/>
</dbReference>
<dbReference type="PANTHER" id="PTHR35805:SF1">
    <property type="entry name" value="ASPARTATE CARBAMOYLTRANSFERASE REGULATORY CHAIN"/>
    <property type="match status" value="1"/>
</dbReference>
<dbReference type="Pfam" id="PF01948">
    <property type="entry name" value="PyrI"/>
    <property type="match status" value="1"/>
</dbReference>
<dbReference type="Pfam" id="PF02748">
    <property type="entry name" value="PyrI_C"/>
    <property type="match status" value="1"/>
</dbReference>
<dbReference type="SUPFAM" id="SSF57825">
    <property type="entry name" value="Aspartate carbamoyltransferase, Regulatory-chain, C-terminal domain"/>
    <property type="match status" value="1"/>
</dbReference>
<dbReference type="SUPFAM" id="SSF54893">
    <property type="entry name" value="Aspartate carbamoyltransferase, Regulatory-chain, N-terminal domain"/>
    <property type="match status" value="1"/>
</dbReference>